<protein>
    <recommendedName>
        <fullName evidence="1">4-hydroxy-tetrahydrodipicolinate reductase</fullName>
        <shortName evidence="1">HTPA reductase</shortName>
        <ecNumber evidence="1">1.17.1.8</ecNumber>
    </recommendedName>
</protein>
<reference key="1">
    <citation type="submission" date="2007-11" db="EMBL/GenBank/DDBJ databases">
        <authorList>
            <consortium name="The Salmonella enterica serovar Paratyphi B Genome Sequencing Project"/>
            <person name="McClelland M."/>
            <person name="Sanderson E.K."/>
            <person name="Porwollik S."/>
            <person name="Spieth J."/>
            <person name="Clifton W.S."/>
            <person name="Fulton R."/>
            <person name="Cordes M."/>
            <person name="Wollam A."/>
            <person name="Shah N."/>
            <person name="Pepin K."/>
            <person name="Bhonagiri V."/>
            <person name="Nash W."/>
            <person name="Johnson M."/>
            <person name="Thiruvilangam P."/>
            <person name="Wilson R."/>
        </authorList>
    </citation>
    <scope>NUCLEOTIDE SEQUENCE [LARGE SCALE GENOMIC DNA]</scope>
    <source>
        <strain>ATCC BAA-1250 / SPB7</strain>
    </source>
</reference>
<name>DAPB_SALPB</name>
<sequence length="273" mass="28878">MHEAQIRVAIAGAGGRMGRQLIQAAMAMEGVQLGAALEREGSSLLGSDAGELAGAGKSGVIVQSSLEAVKDDFDVFIDFTRPEGTLTHLAFCRQHGKGMVIGTTGFDDAGKQAIREASQEIAIVFAANFSVGVNVMLKLLEKAAKVMGDYSDIEIIEAHHRHKVDAPSGTALAMGEAIAGALDKDLKDCAVYSREGYTGERVPGTIGFATVRAGDIVGEHTAMFADIGERVEITHKASSRMTFANGALRSALWLKTKKNGLFDMRDVLGLDVL</sequence>
<comment type="function">
    <text evidence="1">Catalyzes the conversion of 4-hydroxy-tetrahydrodipicolinate (HTPA) to tetrahydrodipicolinate.</text>
</comment>
<comment type="catalytic activity">
    <reaction evidence="1">
        <text>(S)-2,3,4,5-tetrahydrodipicolinate + NAD(+) + H2O = (2S,4S)-4-hydroxy-2,3,4,5-tetrahydrodipicolinate + NADH + H(+)</text>
        <dbReference type="Rhea" id="RHEA:35323"/>
        <dbReference type="ChEBI" id="CHEBI:15377"/>
        <dbReference type="ChEBI" id="CHEBI:15378"/>
        <dbReference type="ChEBI" id="CHEBI:16845"/>
        <dbReference type="ChEBI" id="CHEBI:57540"/>
        <dbReference type="ChEBI" id="CHEBI:57945"/>
        <dbReference type="ChEBI" id="CHEBI:67139"/>
        <dbReference type="EC" id="1.17.1.8"/>
    </reaction>
</comment>
<comment type="catalytic activity">
    <reaction evidence="1">
        <text>(S)-2,3,4,5-tetrahydrodipicolinate + NADP(+) + H2O = (2S,4S)-4-hydroxy-2,3,4,5-tetrahydrodipicolinate + NADPH + H(+)</text>
        <dbReference type="Rhea" id="RHEA:35331"/>
        <dbReference type="ChEBI" id="CHEBI:15377"/>
        <dbReference type="ChEBI" id="CHEBI:15378"/>
        <dbReference type="ChEBI" id="CHEBI:16845"/>
        <dbReference type="ChEBI" id="CHEBI:57783"/>
        <dbReference type="ChEBI" id="CHEBI:58349"/>
        <dbReference type="ChEBI" id="CHEBI:67139"/>
        <dbReference type="EC" id="1.17.1.8"/>
    </reaction>
</comment>
<comment type="pathway">
    <text evidence="1">Amino-acid biosynthesis; L-lysine biosynthesis via DAP pathway; (S)-tetrahydrodipicolinate from L-aspartate: step 4/4.</text>
</comment>
<comment type="subunit">
    <text evidence="1">Homotetramer.</text>
</comment>
<comment type="subcellular location">
    <subcellularLocation>
        <location evidence="1">Cytoplasm</location>
    </subcellularLocation>
</comment>
<comment type="similarity">
    <text evidence="1">Belongs to the DapB family.</text>
</comment>
<comment type="caution">
    <text evidence="2">Was originally thought to be a dihydrodipicolinate reductase (DHDPR), catalyzing the conversion of dihydrodipicolinate to tetrahydrodipicolinate. However, it was shown in E.coli that the substrate of the enzymatic reaction is not dihydrodipicolinate (DHDP) but in fact (2S,4S)-4-hydroxy-2,3,4,5-tetrahydrodipicolinic acid (HTPA), the product released by the DapA-catalyzed reaction.</text>
</comment>
<organism>
    <name type="scientific">Salmonella paratyphi B (strain ATCC BAA-1250 / SPB7)</name>
    <dbReference type="NCBI Taxonomy" id="1016998"/>
    <lineage>
        <taxon>Bacteria</taxon>
        <taxon>Pseudomonadati</taxon>
        <taxon>Pseudomonadota</taxon>
        <taxon>Gammaproteobacteria</taxon>
        <taxon>Enterobacterales</taxon>
        <taxon>Enterobacteriaceae</taxon>
        <taxon>Salmonella</taxon>
    </lineage>
</organism>
<proteinExistence type="inferred from homology"/>
<dbReference type="EC" id="1.17.1.8" evidence="1"/>
<dbReference type="EMBL" id="CP000886">
    <property type="protein sequence ID" value="ABX65519.1"/>
    <property type="molecule type" value="Genomic_DNA"/>
</dbReference>
<dbReference type="RefSeq" id="WP_000544030.1">
    <property type="nucleotide sequence ID" value="NC_010102.1"/>
</dbReference>
<dbReference type="SMR" id="A9MYI6"/>
<dbReference type="KEGG" id="spq:SPAB_00076"/>
<dbReference type="PATRIC" id="fig|1016998.12.peg.74"/>
<dbReference type="HOGENOM" id="CLU_047479_2_1_6"/>
<dbReference type="BioCyc" id="SENT1016998:SPAB_RS00320-MONOMER"/>
<dbReference type="UniPathway" id="UPA00034">
    <property type="reaction ID" value="UER00018"/>
</dbReference>
<dbReference type="Proteomes" id="UP000008556">
    <property type="component" value="Chromosome"/>
</dbReference>
<dbReference type="GO" id="GO:0005829">
    <property type="term" value="C:cytosol"/>
    <property type="evidence" value="ECO:0007669"/>
    <property type="project" value="TreeGrafter"/>
</dbReference>
<dbReference type="GO" id="GO:0008839">
    <property type="term" value="F:4-hydroxy-tetrahydrodipicolinate reductase"/>
    <property type="evidence" value="ECO:0007669"/>
    <property type="project" value="UniProtKB-EC"/>
</dbReference>
<dbReference type="GO" id="GO:0051287">
    <property type="term" value="F:NAD binding"/>
    <property type="evidence" value="ECO:0007669"/>
    <property type="project" value="UniProtKB-UniRule"/>
</dbReference>
<dbReference type="GO" id="GO:0050661">
    <property type="term" value="F:NADP binding"/>
    <property type="evidence" value="ECO:0007669"/>
    <property type="project" value="UniProtKB-UniRule"/>
</dbReference>
<dbReference type="GO" id="GO:0016726">
    <property type="term" value="F:oxidoreductase activity, acting on CH or CH2 groups, NAD or NADP as acceptor"/>
    <property type="evidence" value="ECO:0007669"/>
    <property type="project" value="UniProtKB-UniRule"/>
</dbReference>
<dbReference type="GO" id="GO:0019877">
    <property type="term" value="P:diaminopimelate biosynthetic process"/>
    <property type="evidence" value="ECO:0007669"/>
    <property type="project" value="UniProtKB-UniRule"/>
</dbReference>
<dbReference type="GO" id="GO:0009089">
    <property type="term" value="P:lysine biosynthetic process via diaminopimelate"/>
    <property type="evidence" value="ECO:0007669"/>
    <property type="project" value="UniProtKB-UniRule"/>
</dbReference>
<dbReference type="CDD" id="cd02274">
    <property type="entry name" value="DHDPR_N"/>
    <property type="match status" value="1"/>
</dbReference>
<dbReference type="FunFam" id="3.30.360.10:FF:000004">
    <property type="entry name" value="4-hydroxy-tetrahydrodipicolinate reductase"/>
    <property type="match status" value="1"/>
</dbReference>
<dbReference type="FunFam" id="3.40.50.720:FF:000048">
    <property type="entry name" value="4-hydroxy-tetrahydrodipicolinate reductase"/>
    <property type="match status" value="1"/>
</dbReference>
<dbReference type="Gene3D" id="3.30.360.10">
    <property type="entry name" value="Dihydrodipicolinate Reductase, domain 2"/>
    <property type="match status" value="1"/>
</dbReference>
<dbReference type="Gene3D" id="3.40.50.720">
    <property type="entry name" value="NAD(P)-binding Rossmann-like Domain"/>
    <property type="match status" value="1"/>
</dbReference>
<dbReference type="HAMAP" id="MF_00102">
    <property type="entry name" value="DapB"/>
    <property type="match status" value="1"/>
</dbReference>
<dbReference type="InterPro" id="IPR022663">
    <property type="entry name" value="DapB_C"/>
</dbReference>
<dbReference type="InterPro" id="IPR000846">
    <property type="entry name" value="DapB_N"/>
</dbReference>
<dbReference type="InterPro" id="IPR022664">
    <property type="entry name" value="DapB_N_CS"/>
</dbReference>
<dbReference type="InterPro" id="IPR023940">
    <property type="entry name" value="DHDPR_bac"/>
</dbReference>
<dbReference type="InterPro" id="IPR036291">
    <property type="entry name" value="NAD(P)-bd_dom_sf"/>
</dbReference>
<dbReference type="NCBIfam" id="TIGR00036">
    <property type="entry name" value="dapB"/>
    <property type="match status" value="1"/>
</dbReference>
<dbReference type="PANTHER" id="PTHR20836:SF0">
    <property type="entry name" value="4-HYDROXY-TETRAHYDRODIPICOLINATE REDUCTASE 1, CHLOROPLASTIC-RELATED"/>
    <property type="match status" value="1"/>
</dbReference>
<dbReference type="PANTHER" id="PTHR20836">
    <property type="entry name" value="DIHYDRODIPICOLINATE REDUCTASE"/>
    <property type="match status" value="1"/>
</dbReference>
<dbReference type="Pfam" id="PF05173">
    <property type="entry name" value="DapB_C"/>
    <property type="match status" value="1"/>
</dbReference>
<dbReference type="Pfam" id="PF01113">
    <property type="entry name" value="DapB_N"/>
    <property type="match status" value="1"/>
</dbReference>
<dbReference type="PIRSF" id="PIRSF000161">
    <property type="entry name" value="DHPR"/>
    <property type="match status" value="1"/>
</dbReference>
<dbReference type="SUPFAM" id="SSF55347">
    <property type="entry name" value="Glyceraldehyde-3-phosphate dehydrogenase-like, C-terminal domain"/>
    <property type="match status" value="1"/>
</dbReference>
<dbReference type="SUPFAM" id="SSF51735">
    <property type="entry name" value="NAD(P)-binding Rossmann-fold domains"/>
    <property type="match status" value="1"/>
</dbReference>
<dbReference type="PROSITE" id="PS01298">
    <property type="entry name" value="DAPB"/>
    <property type="match status" value="1"/>
</dbReference>
<evidence type="ECO:0000255" key="1">
    <source>
        <dbReference type="HAMAP-Rule" id="MF_00102"/>
    </source>
</evidence>
<evidence type="ECO:0000305" key="2"/>
<feature type="chain" id="PRO_1000075686" description="4-hydroxy-tetrahydrodipicolinate reductase">
    <location>
        <begin position="1"/>
        <end position="273"/>
    </location>
</feature>
<feature type="active site" description="Proton donor/acceptor" evidence="1">
    <location>
        <position position="159"/>
    </location>
</feature>
<feature type="active site" description="Proton donor" evidence="1">
    <location>
        <position position="163"/>
    </location>
</feature>
<feature type="binding site" evidence="1">
    <location>
        <begin position="12"/>
        <end position="17"/>
    </location>
    <ligand>
        <name>NAD(+)</name>
        <dbReference type="ChEBI" id="CHEBI:57540"/>
    </ligand>
</feature>
<feature type="binding site" evidence="1">
    <location>
        <position position="38"/>
    </location>
    <ligand>
        <name>NAD(+)</name>
        <dbReference type="ChEBI" id="CHEBI:57540"/>
    </ligand>
</feature>
<feature type="binding site" evidence="1">
    <location>
        <position position="39"/>
    </location>
    <ligand>
        <name>NADP(+)</name>
        <dbReference type="ChEBI" id="CHEBI:58349"/>
    </ligand>
</feature>
<feature type="binding site" evidence="1">
    <location>
        <begin position="102"/>
        <end position="104"/>
    </location>
    <ligand>
        <name>NAD(+)</name>
        <dbReference type="ChEBI" id="CHEBI:57540"/>
    </ligand>
</feature>
<feature type="binding site" evidence="1">
    <location>
        <begin position="126"/>
        <end position="129"/>
    </location>
    <ligand>
        <name>NAD(+)</name>
        <dbReference type="ChEBI" id="CHEBI:57540"/>
    </ligand>
</feature>
<feature type="binding site" evidence="1">
    <location>
        <position position="160"/>
    </location>
    <ligand>
        <name>(S)-2,3,4,5-tetrahydrodipicolinate</name>
        <dbReference type="ChEBI" id="CHEBI:16845"/>
    </ligand>
</feature>
<feature type="binding site" evidence="1">
    <location>
        <begin position="169"/>
        <end position="170"/>
    </location>
    <ligand>
        <name>(S)-2,3,4,5-tetrahydrodipicolinate</name>
        <dbReference type="ChEBI" id="CHEBI:16845"/>
    </ligand>
</feature>
<keyword id="KW-0028">Amino-acid biosynthesis</keyword>
<keyword id="KW-0963">Cytoplasm</keyword>
<keyword id="KW-0220">Diaminopimelate biosynthesis</keyword>
<keyword id="KW-0457">Lysine biosynthesis</keyword>
<keyword id="KW-0520">NAD</keyword>
<keyword id="KW-0521">NADP</keyword>
<keyword id="KW-0560">Oxidoreductase</keyword>
<gene>
    <name evidence="1" type="primary">dapB</name>
    <name type="ordered locus">SPAB_00076</name>
</gene>
<accession>A9MYI6</accession>